<organism>
    <name type="scientific">Chilobrachys guangxiensis</name>
    <name type="common">Chinese earth tiger tarantula</name>
    <name type="synonym">Chilobrachys jingzhao</name>
    <dbReference type="NCBI Taxonomy" id="278060"/>
    <lineage>
        <taxon>Eukaryota</taxon>
        <taxon>Metazoa</taxon>
        <taxon>Ecdysozoa</taxon>
        <taxon>Arthropoda</taxon>
        <taxon>Chelicerata</taxon>
        <taxon>Arachnida</taxon>
        <taxon>Araneae</taxon>
        <taxon>Mygalomorphae</taxon>
        <taxon>Theraphosidae</taxon>
        <taxon>Chilobrachys</taxon>
    </lineage>
</organism>
<protein>
    <recommendedName>
        <fullName evidence="7">Mu-theraphotoxin-Cg2a 3</fullName>
        <shortName evidence="7">Mu-TRTX-Cg2a</shortName>
    </recommendedName>
    <alternativeName>
        <fullName evidence="6">Jingzhaotoxin-IV</fullName>
        <shortName evidence="6">JZTX-IV</shortName>
    </alternativeName>
    <alternativeName>
        <fullName evidence="5">Peptide F1-23.73</fullName>
    </alternativeName>
</protein>
<feature type="signal peptide" evidence="2">
    <location>
        <begin position="1"/>
        <end position="21"/>
    </location>
</feature>
<feature type="propeptide" id="PRO_0000398465" evidence="3 4">
    <location>
        <begin position="22"/>
        <end position="50"/>
    </location>
</feature>
<feature type="peptide" id="PRO_0000398466" description="Mu-theraphotoxin-Cg2a 3" evidence="3 4">
    <location>
        <begin position="51"/>
        <end position="84"/>
    </location>
</feature>
<feature type="modified residue" description="Phenylalanine amide" evidence="3 4">
    <location>
        <position position="84"/>
    </location>
</feature>
<feature type="disulfide bond" evidence="1">
    <location>
        <begin position="52"/>
        <end position="66"/>
    </location>
</feature>
<feature type="disulfide bond" evidence="1">
    <location>
        <begin position="59"/>
        <end position="71"/>
    </location>
</feature>
<feature type="disulfide bond" evidence="1">
    <location>
        <begin position="65"/>
        <end position="78"/>
    </location>
</feature>
<keyword id="KW-0027">Amidation</keyword>
<keyword id="KW-0903">Direct protein sequencing</keyword>
<keyword id="KW-1015">Disulfide bond</keyword>
<keyword id="KW-0872">Ion channel impairing toxin</keyword>
<keyword id="KW-0960">Knottin</keyword>
<keyword id="KW-0964">Secreted</keyword>
<keyword id="KW-0732">Signal</keyword>
<keyword id="KW-0800">Toxin</keyword>
<keyword id="KW-0738">Voltage-gated sodium channel impairing toxin</keyword>
<sequence>MKVSVVITLAVLGVMFVWASAAELKERGSDQRDSPAWIKSMERIFQSEERECTKFLGGCSEDSECCPHLGCKDVLYYCAWDGTFGK</sequence>
<comment type="function">
    <text evidence="4">Inhibits both peak current and fast inactivation of voltage-gated sodium channels (Nav) channels. Inhibits the inactivation of Nav on DRG neurons (EC(50)=1.77 uM) and peak current of cardiac myocytes (IC(50)=0.90 uM).</text>
</comment>
<comment type="subcellular location">
    <subcellularLocation>
        <location evidence="3 4">Secreted</location>
    </subcellularLocation>
</comment>
<comment type="tissue specificity">
    <text evidence="8 9">Expressed by the venom gland.</text>
</comment>
<comment type="domain">
    <text evidence="1">The presence of a 'disulfide through disulfide knot' structurally defines this protein as a knottin.</text>
</comment>
<comment type="mass spectrometry">
    <text>Monoisotopic mass.</text>
</comment>
<comment type="similarity">
    <text evidence="7">Belongs to the neurotoxin 10 (Hwtx-1) family. 37 (Jztx-31) subfamily.</text>
</comment>
<proteinExistence type="evidence at protein level"/>
<evidence type="ECO:0000250" key="1">
    <source>
        <dbReference type="UniProtKB" id="B1P1E1"/>
    </source>
</evidence>
<evidence type="ECO:0000255" key="2"/>
<evidence type="ECO:0000269" key="3">
    <source>
    </source>
</evidence>
<evidence type="ECO:0000269" key="4">
    <source>
    </source>
</evidence>
<evidence type="ECO:0000303" key="5">
    <source>
    </source>
</evidence>
<evidence type="ECO:0000303" key="6">
    <source>
    </source>
</evidence>
<evidence type="ECO:0000305" key="7"/>
<evidence type="ECO:0000305" key="8">
    <source>
    </source>
</evidence>
<evidence type="ECO:0000305" key="9">
    <source>
    </source>
</evidence>
<name>JZ31C_CHIGU</name>
<dbReference type="SMR" id="P0CH56"/>
<dbReference type="ArachnoServer" id="AS000832">
    <property type="toxin name" value="delta-theraphotoxin-Cg2a"/>
</dbReference>
<dbReference type="GO" id="GO:0005576">
    <property type="term" value="C:extracellular region"/>
    <property type="evidence" value="ECO:0007669"/>
    <property type="project" value="UniProtKB-SubCell"/>
</dbReference>
<dbReference type="GO" id="GO:0008200">
    <property type="term" value="F:ion channel inhibitor activity"/>
    <property type="evidence" value="ECO:0007669"/>
    <property type="project" value="InterPro"/>
</dbReference>
<dbReference type="GO" id="GO:0017080">
    <property type="term" value="F:sodium channel regulator activity"/>
    <property type="evidence" value="ECO:0007669"/>
    <property type="project" value="UniProtKB-KW"/>
</dbReference>
<dbReference type="GO" id="GO:0090729">
    <property type="term" value="F:toxin activity"/>
    <property type="evidence" value="ECO:0007669"/>
    <property type="project" value="UniProtKB-KW"/>
</dbReference>
<dbReference type="InterPro" id="IPR011696">
    <property type="entry name" value="Huwentoxin-1"/>
</dbReference>
<dbReference type="Pfam" id="PF07740">
    <property type="entry name" value="Toxin_12"/>
    <property type="match status" value="1"/>
</dbReference>
<dbReference type="SUPFAM" id="SSF57059">
    <property type="entry name" value="omega toxin-like"/>
    <property type="match status" value="1"/>
</dbReference>
<reference key="1">
    <citation type="journal article" date="2008" name="Toxicon">
        <title>JZTX-IV, a unique acidic sodium channel toxin isolated from the spider Chilobrachys jingzhao.</title>
        <authorList>
            <person name="Wang M."/>
            <person name="Diao J."/>
            <person name="Li J."/>
            <person name="Tang J."/>
            <person name="Lin Y."/>
            <person name="Hu W."/>
            <person name="Zhang Y."/>
            <person name="Xiao Y."/>
            <person name="Liang S."/>
        </authorList>
    </citation>
    <scope>NUCLEOTIDE SEQUENCE [MRNA]</scope>
    <scope>PROTEIN SEQUENCE OF 51-84</scope>
    <scope>FUNCTION</scope>
    <scope>AMIDATION AT PHE-84</scope>
    <scope>MASS SPECTROMETRY</scope>
    <scope>SUBCELLULAR LOCATION</scope>
    <source>
        <tissue>Venom</tissue>
        <tissue>Venom gland</tissue>
    </source>
</reference>
<reference key="2">
    <citation type="journal article" date="2007" name="Proteomics">
        <title>Proteomic and peptidomic analysis of the venom from Chinese tarantula Chilobrachys jingzhao.</title>
        <authorList>
            <person name="Liao Z."/>
            <person name="Cao J."/>
            <person name="Li S."/>
            <person name="Yan X."/>
            <person name="Hu W."/>
            <person name="He Q."/>
            <person name="Chen J."/>
            <person name="Tang J."/>
            <person name="Xie J."/>
            <person name="Liang S."/>
        </authorList>
    </citation>
    <scope>PROTEIN SEQUENCE OF 51-84</scope>
    <scope>MASS SPECTROMETRY</scope>
    <scope>AMIDATION AT PHE-84</scope>
    <scope>SUBCELLULAR LOCATION</scope>
    <source>
        <tissue>Venom</tissue>
    </source>
</reference>
<accession>P0CH56</accession>